<protein>
    <recommendedName>
        <fullName evidence="1">Peptide chain release factor 1</fullName>
        <shortName evidence="1">RF-1</shortName>
    </recommendedName>
</protein>
<feature type="chain" id="PRO_1000193503" description="Peptide chain release factor 1">
    <location>
        <begin position="1"/>
        <end position="363"/>
    </location>
</feature>
<feature type="region of interest" description="Disordered" evidence="2">
    <location>
        <begin position="286"/>
        <end position="305"/>
    </location>
</feature>
<feature type="compositionally biased region" description="Basic and acidic residues" evidence="2">
    <location>
        <begin position="286"/>
        <end position="296"/>
    </location>
</feature>
<feature type="modified residue" description="N5-methylglutamine" evidence="1">
    <location>
        <position position="237"/>
    </location>
</feature>
<dbReference type="EMBL" id="CP001252">
    <property type="protein sequence ID" value="ACK48028.1"/>
    <property type="molecule type" value="Genomic_DNA"/>
</dbReference>
<dbReference type="RefSeq" id="WP_011845827.1">
    <property type="nucleotide sequence ID" value="NC_011663.1"/>
</dbReference>
<dbReference type="SMR" id="B8E815"/>
<dbReference type="KEGG" id="sbp:Sbal223_3546"/>
<dbReference type="HOGENOM" id="CLU_036856_0_1_6"/>
<dbReference type="Proteomes" id="UP000002507">
    <property type="component" value="Chromosome"/>
</dbReference>
<dbReference type="GO" id="GO:0005737">
    <property type="term" value="C:cytoplasm"/>
    <property type="evidence" value="ECO:0007669"/>
    <property type="project" value="UniProtKB-SubCell"/>
</dbReference>
<dbReference type="GO" id="GO:0016149">
    <property type="term" value="F:translation release factor activity, codon specific"/>
    <property type="evidence" value="ECO:0007669"/>
    <property type="project" value="UniProtKB-UniRule"/>
</dbReference>
<dbReference type="FunFam" id="3.30.160.20:FF:000004">
    <property type="entry name" value="Peptide chain release factor 1"/>
    <property type="match status" value="1"/>
</dbReference>
<dbReference type="FunFam" id="3.30.70.1660:FF:000002">
    <property type="entry name" value="Peptide chain release factor 1"/>
    <property type="match status" value="1"/>
</dbReference>
<dbReference type="FunFam" id="3.30.70.1660:FF:000004">
    <property type="entry name" value="Peptide chain release factor 1"/>
    <property type="match status" value="1"/>
</dbReference>
<dbReference type="Gene3D" id="3.30.160.20">
    <property type="match status" value="1"/>
</dbReference>
<dbReference type="Gene3D" id="3.30.70.1660">
    <property type="match status" value="2"/>
</dbReference>
<dbReference type="Gene3D" id="6.10.140.1950">
    <property type="match status" value="1"/>
</dbReference>
<dbReference type="HAMAP" id="MF_00093">
    <property type="entry name" value="Rel_fac_1"/>
    <property type="match status" value="1"/>
</dbReference>
<dbReference type="InterPro" id="IPR005139">
    <property type="entry name" value="PCRF"/>
</dbReference>
<dbReference type="InterPro" id="IPR000352">
    <property type="entry name" value="Pep_chain_release_fac_I"/>
</dbReference>
<dbReference type="InterPro" id="IPR045853">
    <property type="entry name" value="Pep_chain_release_fac_I_sf"/>
</dbReference>
<dbReference type="InterPro" id="IPR050057">
    <property type="entry name" value="Prokaryotic/Mito_RF"/>
</dbReference>
<dbReference type="InterPro" id="IPR004373">
    <property type="entry name" value="RF-1"/>
</dbReference>
<dbReference type="NCBIfam" id="TIGR00019">
    <property type="entry name" value="prfA"/>
    <property type="match status" value="1"/>
</dbReference>
<dbReference type="NCBIfam" id="NF001859">
    <property type="entry name" value="PRK00591.1"/>
    <property type="match status" value="1"/>
</dbReference>
<dbReference type="PANTHER" id="PTHR43804">
    <property type="entry name" value="LD18447P"/>
    <property type="match status" value="1"/>
</dbReference>
<dbReference type="PANTHER" id="PTHR43804:SF7">
    <property type="entry name" value="LD18447P"/>
    <property type="match status" value="1"/>
</dbReference>
<dbReference type="Pfam" id="PF03462">
    <property type="entry name" value="PCRF"/>
    <property type="match status" value="1"/>
</dbReference>
<dbReference type="Pfam" id="PF00472">
    <property type="entry name" value="RF-1"/>
    <property type="match status" value="1"/>
</dbReference>
<dbReference type="SMART" id="SM00937">
    <property type="entry name" value="PCRF"/>
    <property type="match status" value="1"/>
</dbReference>
<dbReference type="SUPFAM" id="SSF75620">
    <property type="entry name" value="Release factor"/>
    <property type="match status" value="1"/>
</dbReference>
<dbReference type="PROSITE" id="PS00745">
    <property type="entry name" value="RF_PROK_I"/>
    <property type="match status" value="1"/>
</dbReference>
<reference key="1">
    <citation type="submission" date="2008-12" db="EMBL/GenBank/DDBJ databases">
        <title>Complete sequence of chromosome of Shewanella baltica OS223.</title>
        <authorList>
            <consortium name="US DOE Joint Genome Institute"/>
            <person name="Lucas S."/>
            <person name="Copeland A."/>
            <person name="Lapidus A."/>
            <person name="Glavina del Rio T."/>
            <person name="Dalin E."/>
            <person name="Tice H."/>
            <person name="Bruce D."/>
            <person name="Goodwin L."/>
            <person name="Pitluck S."/>
            <person name="Chertkov O."/>
            <person name="Meincke L."/>
            <person name="Brettin T."/>
            <person name="Detter J.C."/>
            <person name="Han C."/>
            <person name="Kuske C.R."/>
            <person name="Larimer F."/>
            <person name="Land M."/>
            <person name="Hauser L."/>
            <person name="Kyrpides N."/>
            <person name="Ovchinnikova G."/>
            <person name="Brettar I."/>
            <person name="Rodrigues J."/>
            <person name="Konstantinidis K."/>
            <person name="Tiedje J."/>
        </authorList>
    </citation>
    <scope>NUCLEOTIDE SEQUENCE [LARGE SCALE GENOMIC DNA]</scope>
    <source>
        <strain>OS223</strain>
    </source>
</reference>
<gene>
    <name evidence="1" type="primary">prfA</name>
    <name type="ordered locus">Sbal223_3546</name>
</gene>
<keyword id="KW-0963">Cytoplasm</keyword>
<keyword id="KW-0488">Methylation</keyword>
<keyword id="KW-0648">Protein biosynthesis</keyword>
<accession>B8E815</accession>
<sequence length="363" mass="40505">MKESVIRKLEGLLERNEEVMALLGDASVISDQDRFRALSKEYAQLEDVVAGFKAYQQAQVDLDSAKEMLEEDDAEMREMAQEEMKAAKAKLEHLEDELQILLLPKDPDDDKNAFVEIRAGAGGDEAAIFAGDLFRMYSRYAEANRWQIEIMSCNEGEHGGFKEVIMKVSGDGVYGKLKFESGGHRVQRVPETESQGRVHTSAVTVVVLHEVPEAEAISINPADLKVDTFRSSGAGGQHVNKTDSAIRITHIPTGIVVECQDQRSQHKNRAQAMSVLAARIQALEDEKRRSAEESTRRSLVASGDRSERVRTYNFPQGRVSEHRINLTLYRLNEVMEGDLDAILLPLMQEHQADQLAALADEQG</sequence>
<name>RF1_SHEB2</name>
<proteinExistence type="inferred from homology"/>
<organism>
    <name type="scientific">Shewanella baltica (strain OS223)</name>
    <dbReference type="NCBI Taxonomy" id="407976"/>
    <lineage>
        <taxon>Bacteria</taxon>
        <taxon>Pseudomonadati</taxon>
        <taxon>Pseudomonadota</taxon>
        <taxon>Gammaproteobacteria</taxon>
        <taxon>Alteromonadales</taxon>
        <taxon>Shewanellaceae</taxon>
        <taxon>Shewanella</taxon>
    </lineage>
</organism>
<evidence type="ECO:0000255" key="1">
    <source>
        <dbReference type="HAMAP-Rule" id="MF_00093"/>
    </source>
</evidence>
<evidence type="ECO:0000256" key="2">
    <source>
        <dbReference type="SAM" id="MobiDB-lite"/>
    </source>
</evidence>
<comment type="function">
    <text evidence="1">Peptide chain release factor 1 directs the termination of translation in response to the peptide chain termination codons UAG and UAA.</text>
</comment>
<comment type="subcellular location">
    <subcellularLocation>
        <location evidence="1">Cytoplasm</location>
    </subcellularLocation>
</comment>
<comment type="PTM">
    <text evidence="1">Methylated by PrmC. Methylation increases the termination efficiency of RF1.</text>
</comment>
<comment type="similarity">
    <text evidence="1">Belongs to the prokaryotic/mitochondrial release factor family.</text>
</comment>